<feature type="chain" id="PRO_0000130393" description="Large ribosomal subunit protein uL29">
    <location>
        <begin position="1"/>
        <end position="66"/>
    </location>
</feature>
<organism>
    <name type="scientific">Geobacillus kaustophilus (strain HTA426)</name>
    <dbReference type="NCBI Taxonomy" id="235909"/>
    <lineage>
        <taxon>Bacteria</taxon>
        <taxon>Bacillati</taxon>
        <taxon>Bacillota</taxon>
        <taxon>Bacilli</taxon>
        <taxon>Bacillales</taxon>
        <taxon>Anoxybacillaceae</taxon>
        <taxon>Geobacillus</taxon>
        <taxon>Geobacillus thermoleovorans group</taxon>
    </lineage>
</organism>
<gene>
    <name evidence="1" type="primary">rpmC</name>
    <name type="ordered locus">GK0114</name>
</gene>
<evidence type="ECO:0000255" key="1">
    <source>
        <dbReference type="HAMAP-Rule" id="MF_00374"/>
    </source>
</evidence>
<evidence type="ECO:0000305" key="2"/>
<keyword id="KW-1185">Reference proteome</keyword>
<keyword id="KW-0687">Ribonucleoprotein</keyword>
<keyword id="KW-0689">Ribosomal protein</keyword>
<reference key="1">
    <citation type="journal article" date="2004" name="Nucleic Acids Res.">
        <title>Thermoadaptation trait revealed by the genome sequence of thermophilic Geobacillus kaustophilus.</title>
        <authorList>
            <person name="Takami H."/>
            <person name="Takaki Y."/>
            <person name="Chee G.-J."/>
            <person name="Nishi S."/>
            <person name="Shimamura S."/>
            <person name="Suzuki H."/>
            <person name="Matsui S."/>
            <person name="Uchiyama I."/>
        </authorList>
    </citation>
    <scope>NUCLEOTIDE SEQUENCE [LARGE SCALE GENOMIC DNA]</scope>
    <source>
        <strain>HTA426</strain>
    </source>
</reference>
<dbReference type="EMBL" id="BA000043">
    <property type="protein sequence ID" value="BAD74399.1"/>
    <property type="molecule type" value="Genomic_DNA"/>
</dbReference>
<dbReference type="RefSeq" id="WP_011229628.1">
    <property type="nucleotide sequence ID" value="NC_006510.1"/>
</dbReference>
<dbReference type="SMR" id="Q5L415"/>
<dbReference type="STRING" id="235909.GK0114"/>
<dbReference type="GeneID" id="89612892"/>
<dbReference type="KEGG" id="gka:GK0114"/>
<dbReference type="eggNOG" id="COG0255">
    <property type="taxonomic scope" value="Bacteria"/>
</dbReference>
<dbReference type="HOGENOM" id="CLU_158491_5_2_9"/>
<dbReference type="Proteomes" id="UP000001172">
    <property type="component" value="Chromosome"/>
</dbReference>
<dbReference type="GO" id="GO:0022625">
    <property type="term" value="C:cytosolic large ribosomal subunit"/>
    <property type="evidence" value="ECO:0007669"/>
    <property type="project" value="TreeGrafter"/>
</dbReference>
<dbReference type="GO" id="GO:0003735">
    <property type="term" value="F:structural constituent of ribosome"/>
    <property type="evidence" value="ECO:0007669"/>
    <property type="project" value="InterPro"/>
</dbReference>
<dbReference type="GO" id="GO:0006412">
    <property type="term" value="P:translation"/>
    <property type="evidence" value="ECO:0007669"/>
    <property type="project" value="UniProtKB-UniRule"/>
</dbReference>
<dbReference type="CDD" id="cd00427">
    <property type="entry name" value="Ribosomal_L29_HIP"/>
    <property type="match status" value="1"/>
</dbReference>
<dbReference type="FunFam" id="1.10.287.310:FF:000001">
    <property type="entry name" value="50S ribosomal protein L29"/>
    <property type="match status" value="1"/>
</dbReference>
<dbReference type="Gene3D" id="1.10.287.310">
    <property type="match status" value="1"/>
</dbReference>
<dbReference type="HAMAP" id="MF_00374">
    <property type="entry name" value="Ribosomal_uL29"/>
    <property type="match status" value="1"/>
</dbReference>
<dbReference type="InterPro" id="IPR050063">
    <property type="entry name" value="Ribosomal_protein_uL29"/>
</dbReference>
<dbReference type="InterPro" id="IPR001854">
    <property type="entry name" value="Ribosomal_uL29"/>
</dbReference>
<dbReference type="InterPro" id="IPR018254">
    <property type="entry name" value="Ribosomal_uL29_CS"/>
</dbReference>
<dbReference type="InterPro" id="IPR036049">
    <property type="entry name" value="Ribosomal_uL29_sf"/>
</dbReference>
<dbReference type="NCBIfam" id="TIGR00012">
    <property type="entry name" value="L29"/>
    <property type="match status" value="1"/>
</dbReference>
<dbReference type="PANTHER" id="PTHR10916">
    <property type="entry name" value="60S RIBOSOMAL PROTEIN L35/50S RIBOSOMAL PROTEIN L29"/>
    <property type="match status" value="1"/>
</dbReference>
<dbReference type="PANTHER" id="PTHR10916:SF0">
    <property type="entry name" value="LARGE RIBOSOMAL SUBUNIT PROTEIN UL29C"/>
    <property type="match status" value="1"/>
</dbReference>
<dbReference type="Pfam" id="PF00831">
    <property type="entry name" value="Ribosomal_L29"/>
    <property type="match status" value="1"/>
</dbReference>
<dbReference type="SUPFAM" id="SSF46561">
    <property type="entry name" value="Ribosomal protein L29 (L29p)"/>
    <property type="match status" value="1"/>
</dbReference>
<dbReference type="PROSITE" id="PS00579">
    <property type="entry name" value="RIBOSOMAL_L29"/>
    <property type="match status" value="1"/>
</dbReference>
<protein>
    <recommendedName>
        <fullName evidence="1">Large ribosomal subunit protein uL29</fullName>
    </recommendedName>
    <alternativeName>
        <fullName evidence="2">50S ribosomal protein L29</fullName>
    </alternativeName>
</protein>
<name>RL29_GEOKA</name>
<accession>Q5L415</accession>
<sequence>MKAKEIRELTTAEIEQKIKALKEELFNLRFQLATGQLENTARIRQVRKDIARMKTIIRERELAANK</sequence>
<proteinExistence type="inferred from homology"/>
<comment type="similarity">
    <text evidence="1">Belongs to the universal ribosomal protein uL29 family.</text>
</comment>